<protein>
    <recommendedName>
        <fullName>Uncharacterized ABC transporter ATP-binding protein y4oS</fullName>
    </recommendedName>
</protein>
<keyword id="KW-0067">ATP-binding</keyword>
<keyword id="KW-0997">Cell inner membrane</keyword>
<keyword id="KW-1003">Cell membrane</keyword>
<keyword id="KW-0472">Membrane</keyword>
<keyword id="KW-0547">Nucleotide-binding</keyword>
<keyword id="KW-0614">Plasmid</keyword>
<keyword id="KW-1185">Reference proteome</keyword>
<keyword id="KW-0813">Transport</keyword>
<reference key="1">
    <citation type="journal article" date="1997" name="Nature">
        <title>Molecular basis of symbiosis between Rhizobium and legumes.</title>
        <authorList>
            <person name="Freiberg C.A."/>
            <person name="Fellay R."/>
            <person name="Bairoch A."/>
            <person name="Broughton W.J."/>
            <person name="Rosenthal A."/>
            <person name="Perret X."/>
        </authorList>
    </citation>
    <scope>NUCLEOTIDE SEQUENCE [LARGE SCALE GENOMIC DNA]</scope>
    <source>
        <strain>NBRC 101917 / NGR234</strain>
    </source>
</reference>
<reference key="2">
    <citation type="journal article" date="2009" name="Appl. Environ. Microbiol.">
        <title>Rhizobium sp. strain NGR234 possesses a remarkable number of secretion systems.</title>
        <authorList>
            <person name="Schmeisser C."/>
            <person name="Liesegang H."/>
            <person name="Krysciak D."/>
            <person name="Bakkou N."/>
            <person name="Le Quere A."/>
            <person name="Wollherr A."/>
            <person name="Heinemeyer I."/>
            <person name="Morgenstern B."/>
            <person name="Pommerening-Roeser A."/>
            <person name="Flores M."/>
            <person name="Palacios R."/>
            <person name="Brenner S."/>
            <person name="Gottschalk G."/>
            <person name="Schmitz R.A."/>
            <person name="Broughton W.J."/>
            <person name="Perret X."/>
            <person name="Strittmatter A.W."/>
            <person name="Streit W.R."/>
        </authorList>
    </citation>
    <scope>NUCLEOTIDE SEQUENCE [LARGE SCALE GENOMIC DNA]</scope>
    <source>
        <strain>NBRC 101917 / NGR234</strain>
    </source>
</reference>
<evidence type="ECO:0000255" key="1">
    <source>
        <dbReference type="PROSITE-ProRule" id="PRU00434"/>
    </source>
</evidence>
<evidence type="ECO:0000305" key="2"/>
<name>Y4OS_SINFN</name>
<organism>
    <name type="scientific">Sinorhizobium fredii (strain NBRC 101917 / NGR234)</name>
    <dbReference type="NCBI Taxonomy" id="394"/>
    <lineage>
        <taxon>Bacteria</taxon>
        <taxon>Pseudomonadati</taxon>
        <taxon>Pseudomonadota</taxon>
        <taxon>Alphaproteobacteria</taxon>
        <taxon>Hyphomicrobiales</taxon>
        <taxon>Rhizobiaceae</taxon>
        <taxon>Sinorhizobium/Ensifer group</taxon>
        <taxon>Sinorhizobium</taxon>
    </lineage>
</organism>
<feature type="chain" id="PRO_0000093273" description="Uncharacterized ABC transporter ATP-binding protein y4oS">
    <location>
        <begin position="1"/>
        <end position="371"/>
    </location>
</feature>
<feature type="domain" description="ABC transporter" evidence="1">
    <location>
        <begin position="20"/>
        <end position="250"/>
    </location>
</feature>
<feature type="binding site" evidence="1">
    <location>
        <begin position="52"/>
        <end position="59"/>
    </location>
    <ligand>
        <name>ATP</name>
        <dbReference type="ChEBI" id="CHEBI:30616"/>
    </ligand>
</feature>
<gene>
    <name type="ordered locus">NGR_a02170</name>
    <name type="ORF">y4oS</name>
</gene>
<comment type="function">
    <text>Probably part of a binding-protein-dependent transport system y4oPQRS. This system probably transports a sugar-like molecule. Probably responsible for energy coupling to the transport system.</text>
</comment>
<comment type="subcellular location">
    <subcellularLocation>
        <location evidence="2">Cell inner membrane</location>
        <topology evidence="2">Peripheral membrane protein</topology>
    </subcellularLocation>
</comment>
<comment type="similarity">
    <text evidence="2">Belongs to the ABC transporter superfamily.</text>
</comment>
<accession>P55604</accession>
<geneLocation type="plasmid">
    <name>sym pNGR234a</name>
</geneLocation>
<proteinExistence type="inferred from homology"/>
<sequence length="371" mass="40580">MTGMVGTILRRKAEQNMTDVTIRNVTKRYGALTVIPQLSFRIEDGEFVVLVGPSGCGKSTLLRMLAGLEEISGGDLLMGADVINDRPAKERDMAIVFQNYALYPHMTVAENMGFALKLRKRPRAEIDERVDKAAAILGLGKLLDRYPRALSGGQRQRVAMGRAIVRDPQVFLFDEPLSNLDAKLRVQMRAEIKALHQRLKITTVYVTHDQIEAMTMADKIVVMNEGRVEQMGTPLELYDRPANIFVAGFIGSPSMNFLPATVAATNGPLLKTPEGVALPIDGGPTLTGRSEVTYGIRPEHLQLGETGIPAEVVVVEPTGSETQLYVTVGGREVVAVLRDRVDVRPGEKIWLTPRKGCAHLFDPNTGARIAG</sequence>
<dbReference type="EMBL" id="U00090">
    <property type="protein sequence ID" value="AAB91805.1"/>
    <property type="molecule type" value="Genomic_DNA"/>
</dbReference>
<dbReference type="RefSeq" id="NP_444008.1">
    <property type="nucleotide sequence ID" value="NC_000914.2"/>
</dbReference>
<dbReference type="SMR" id="P55604"/>
<dbReference type="KEGG" id="rhi:NGR_a02170"/>
<dbReference type="PATRIC" id="fig|394.7.peg.228"/>
<dbReference type="eggNOG" id="COG3842">
    <property type="taxonomic scope" value="Bacteria"/>
</dbReference>
<dbReference type="HOGENOM" id="CLU_000604_1_1_5"/>
<dbReference type="OrthoDB" id="8045127at2"/>
<dbReference type="PRO" id="PR:P55604"/>
<dbReference type="Proteomes" id="UP000001054">
    <property type="component" value="Plasmid pNGR234a"/>
</dbReference>
<dbReference type="GO" id="GO:0055052">
    <property type="term" value="C:ATP-binding cassette (ABC) transporter complex, substrate-binding subunit-containing"/>
    <property type="evidence" value="ECO:0007669"/>
    <property type="project" value="TreeGrafter"/>
</dbReference>
<dbReference type="GO" id="GO:0140359">
    <property type="term" value="F:ABC-type transporter activity"/>
    <property type="evidence" value="ECO:0007669"/>
    <property type="project" value="InterPro"/>
</dbReference>
<dbReference type="GO" id="GO:0005524">
    <property type="term" value="F:ATP binding"/>
    <property type="evidence" value="ECO:0007669"/>
    <property type="project" value="UniProtKB-KW"/>
</dbReference>
<dbReference type="GO" id="GO:0016887">
    <property type="term" value="F:ATP hydrolysis activity"/>
    <property type="evidence" value="ECO:0007669"/>
    <property type="project" value="InterPro"/>
</dbReference>
<dbReference type="GO" id="GO:0008643">
    <property type="term" value="P:carbohydrate transport"/>
    <property type="evidence" value="ECO:0007669"/>
    <property type="project" value="InterPro"/>
</dbReference>
<dbReference type="CDD" id="cd03301">
    <property type="entry name" value="ABC_MalK_N"/>
    <property type="match status" value="1"/>
</dbReference>
<dbReference type="FunFam" id="3.40.50.300:FF:000042">
    <property type="entry name" value="Maltose/maltodextrin ABC transporter, ATP-binding protein"/>
    <property type="match status" value="1"/>
</dbReference>
<dbReference type="Gene3D" id="2.40.50.100">
    <property type="match status" value="1"/>
</dbReference>
<dbReference type="Gene3D" id="2.40.50.140">
    <property type="entry name" value="Nucleic acid-binding proteins"/>
    <property type="match status" value="1"/>
</dbReference>
<dbReference type="Gene3D" id="3.40.50.300">
    <property type="entry name" value="P-loop containing nucleotide triphosphate hydrolases"/>
    <property type="match status" value="1"/>
</dbReference>
<dbReference type="InterPro" id="IPR003593">
    <property type="entry name" value="AAA+_ATPase"/>
</dbReference>
<dbReference type="InterPro" id="IPR003439">
    <property type="entry name" value="ABC_transporter-like_ATP-bd"/>
</dbReference>
<dbReference type="InterPro" id="IPR017871">
    <property type="entry name" value="ABC_transporter-like_CS"/>
</dbReference>
<dbReference type="InterPro" id="IPR015855">
    <property type="entry name" value="ABC_transpr_MalK-like"/>
</dbReference>
<dbReference type="InterPro" id="IPR047641">
    <property type="entry name" value="ABC_transpr_MalK/UgpC-like"/>
</dbReference>
<dbReference type="InterPro" id="IPR008995">
    <property type="entry name" value="Mo/tungstate-bd_C_term_dom"/>
</dbReference>
<dbReference type="InterPro" id="IPR012340">
    <property type="entry name" value="NA-bd_OB-fold"/>
</dbReference>
<dbReference type="InterPro" id="IPR040582">
    <property type="entry name" value="OB_MalK-like"/>
</dbReference>
<dbReference type="InterPro" id="IPR027417">
    <property type="entry name" value="P-loop_NTPase"/>
</dbReference>
<dbReference type="InterPro" id="IPR005116">
    <property type="entry name" value="Transp-assoc_OB_typ1"/>
</dbReference>
<dbReference type="NCBIfam" id="NF008653">
    <property type="entry name" value="PRK11650.1"/>
    <property type="match status" value="1"/>
</dbReference>
<dbReference type="PANTHER" id="PTHR43875:SF10">
    <property type="entry name" value="BLL2173 PROTEIN"/>
    <property type="match status" value="1"/>
</dbReference>
<dbReference type="PANTHER" id="PTHR43875">
    <property type="entry name" value="MALTODEXTRIN IMPORT ATP-BINDING PROTEIN MSMX"/>
    <property type="match status" value="1"/>
</dbReference>
<dbReference type="Pfam" id="PF00005">
    <property type="entry name" value="ABC_tran"/>
    <property type="match status" value="1"/>
</dbReference>
<dbReference type="Pfam" id="PF17912">
    <property type="entry name" value="OB_MalK"/>
    <property type="match status" value="1"/>
</dbReference>
<dbReference type="Pfam" id="PF03459">
    <property type="entry name" value="TOBE"/>
    <property type="match status" value="1"/>
</dbReference>
<dbReference type="SMART" id="SM00382">
    <property type="entry name" value="AAA"/>
    <property type="match status" value="1"/>
</dbReference>
<dbReference type="SUPFAM" id="SSF50331">
    <property type="entry name" value="MOP-like"/>
    <property type="match status" value="1"/>
</dbReference>
<dbReference type="SUPFAM" id="SSF52540">
    <property type="entry name" value="P-loop containing nucleoside triphosphate hydrolases"/>
    <property type="match status" value="1"/>
</dbReference>
<dbReference type="PROSITE" id="PS00211">
    <property type="entry name" value="ABC_TRANSPORTER_1"/>
    <property type="match status" value="1"/>
</dbReference>
<dbReference type="PROSITE" id="PS50893">
    <property type="entry name" value="ABC_TRANSPORTER_2"/>
    <property type="match status" value="1"/>
</dbReference>